<keyword id="KW-0274">FAD</keyword>
<keyword id="KW-0285">Flavoprotein</keyword>
<keyword id="KW-0444">Lipid biosynthesis</keyword>
<keyword id="KW-0443">Lipid metabolism</keyword>
<keyword id="KW-0472">Membrane</keyword>
<keyword id="KW-0520">NAD</keyword>
<keyword id="KW-0560">Oxidoreductase</keyword>
<keyword id="KW-1185">Reference proteome</keyword>
<keyword id="KW-0752">Steroid biosynthesis</keyword>
<keyword id="KW-0753">Steroid metabolism</keyword>
<keyword id="KW-0756">Sterol biosynthesis</keyword>
<keyword id="KW-1207">Sterol metabolism</keyword>
<keyword id="KW-0812">Transmembrane</keyword>
<keyword id="KW-1133">Transmembrane helix</keyword>
<feature type="chain" id="PRO_0000287544" description="NADH-cytochrome b5 reductase 1">
    <location>
        <begin position="1"/>
        <end position="305"/>
    </location>
</feature>
<feature type="transmembrane region" description="Helical" evidence="2">
    <location>
        <begin position="8"/>
        <end position="28"/>
    </location>
</feature>
<feature type="domain" description="FAD-binding FR-type" evidence="3">
    <location>
        <begin position="44"/>
        <end position="156"/>
    </location>
</feature>
<feature type="binding site" evidence="1">
    <location>
        <begin position="136"/>
        <end position="166"/>
    </location>
    <ligand>
        <name>FAD</name>
        <dbReference type="ChEBI" id="CHEBI:57692"/>
    </ligand>
</feature>
<feature type="binding site" evidence="1">
    <location>
        <begin position="175"/>
        <end position="210"/>
    </location>
    <ligand>
        <name>FAD</name>
        <dbReference type="ChEBI" id="CHEBI:57692"/>
    </ligand>
</feature>
<gene>
    <name type="primary">CYB5R1</name>
</gene>
<protein>
    <recommendedName>
        <fullName>NADH-cytochrome b5 reductase 1</fullName>
        <shortName>b5R.1</shortName>
        <ecNumber>1.6.2.2</ecNumber>
    </recommendedName>
</protein>
<comment type="function">
    <text evidence="1">NADH-cytochrome b5 reductases are involved in desaturation and elongation of fatty acids, cholesterol biosynthesis, drug metabolism, and, in erythrocyte, methemoglobin reduction.</text>
</comment>
<comment type="catalytic activity">
    <reaction>
        <text>2 Fe(III)-[cytochrome b5] + NADH = 2 Fe(II)-[cytochrome b5] + NAD(+) + H(+)</text>
        <dbReference type="Rhea" id="RHEA:46680"/>
        <dbReference type="Rhea" id="RHEA-COMP:10438"/>
        <dbReference type="Rhea" id="RHEA-COMP:10439"/>
        <dbReference type="ChEBI" id="CHEBI:15378"/>
        <dbReference type="ChEBI" id="CHEBI:29033"/>
        <dbReference type="ChEBI" id="CHEBI:29034"/>
        <dbReference type="ChEBI" id="CHEBI:57540"/>
        <dbReference type="ChEBI" id="CHEBI:57945"/>
        <dbReference type="EC" id="1.6.2.2"/>
    </reaction>
</comment>
<comment type="cofactor">
    <cofactor evidence="1">
        <name>FAD</name>
        <dbReference type="ChEBI" id="CHEBI:57692"/>
    </cofactor>
</comment>
<comment type="subcellular location">
    <subcellularLocation>
        <location evidence="4">Membrane</location>
        <topology evidence="4">Single-pass membrane protein</topology>
    </subcellularLocation>
</comment>
<comment type="similarity">
    <text evidence="4">Belongs to the flavoprotein pyridine nucleotide cytochrome reductase family.</text>
</comment>
<proteinExistence type="evidence at transcript level"/>
<dbReference type="EC" id="1.6.2.2"/>
<dbReference type="EMBL" id="BC104584">
    <property type="protein sequence ID" value="AAI04585.1"/>
    <property type="molecule type" value="mRNA"/>
</dbReference>
<dbReference type="RefSeq" id="NP_001029690.1">
    <property type="nucleotide sequence ID" value="NM_001034518.1"/>
</dbReference>
<dbReference type="SMR" id="Q3MHW9"/>
<dbReference type="FunCoup" id="Q3MHW9">
    <property type="interactions" value="2298"/>
</dbReference>
<dbReference type="STRING" id="9913.ENSBTAP00000026548"/>
<dbReference type="PaxDb" id="9913-ENSBTAP00000026548"/>
<dbReference type="Ensembl" id="ENSBTAT00000026548.6">
    <property type="protein sequence ID" value="ENSBTAP00000026548.5"/>
    <property type="gene ID" value="ENSBTAG00000019927.6"/>
</dbReference>
<dbReference type="GeneID" id="516287"/>
<dbReference type="KEGG" id="bta:516287"/>
<dbReference type="CTD" id="51706"/>
<dbReference type="VEuPathDB" id="HostDB:ENSBTAG00000019927"/>
<dbReference type="VGNC" id="VGNC:97257">
    <property type="gene designation" value="CYB5R1"/>
</dbReference>
<dbReference type="eggNOG" id="KOG0534">
    <property type="taxonomic scope" value="Eukaryota"/>
</dbReference>
<dbReference type="GeneTree" id="ENSGT00940000160784"/>
<dbReference type="InParanoid" id="Q3MHW9"/>
<dbReference type="OMA" id="CLDPENW"/>
<dbReference type="OrthoDB" id="432685at2759"/>
<dbReference type="Reactome" id="R-BTA-114608">
    <property type="pathway name" value="Platelet degranulation"/>
</dbReference>
<dbReference type="Reactome" id="R-BTA-1237044">
    <property type="pathway name" value="Erythrocytes take up carbon dioxide and release oxygen"/>
</dbReference>
<dbReference type="Proteomes" id="UP000009136">
    <property type="component" value="Chromosome 16"/>
</dbReference>
<dbReference type="Bgee" id="ENSBTAG00000019927">
    <property type="expression patterns" value="Expressed in corpus luteum and 105 other cell types or tissues"/>
</dbReference>
<dbReference type="GO" id="GO:0016020">
    <property type="term" value="C:membrane"/>
    <property type="evidence" value="ECO:0007669"/>
    <property type="project" value="UniProtKB-SubCell"/>
</dbReference>
<dbReference type="GO" id="GO:0005739">
    <property type="term" value="C:mitochondrion"/>
    <property type="evidence" value="ECO:0000318"/>
    <property type="project" value="GO_Central"/>
</dbReference>
<dbReference type="GO" id="GO:0004128">
    <property type="term" value="F:cytochrome-b5 reductase activity, acting on NAD(P)H"/>
    <property type="evidence" value="ECO:0007669"/>
    <property type="project" value="UniProtKB-EC"/>
</dbReference>
<dbReference type="GO" id="GO:0071949">
    <property type="term" value="F:FAD binding"/>
    <property type="evidence" value="ECO:0000318"/>
    <property type="project" value="GO_Central"/>
</dbReference>
<dbReference type="GO" id="GO:0016126">
    <property type="term" value="P:sterol biosynthetic process"/>
    <property type="evidence" value="ECO:0007669"/>
    <property type="project" value="UniProtKB-KW"/>
</dbReference>
<dbReference type="CDD" id="cd06183">
    <property type="entry name" value="cyt_b5_reduct_like"/>
    <property type="match status" value="1"/>
</dbReference>
<dbReference type="FunFam" id="2.40.30.10:FF:000021">
    <property type="entry name" value="NADH-cytochrome b5 reductase"/>
    <property type="match status" value="1"/>
</dbReference>
<dbReference type="FunFam" id="3.40.50.80:FF:000005">
    <property type="entry name" value="NADH-cytochrome b5 reductase"/>
    <property type="match status" value="1"/>
</dbReference>
<dbReference type="Gene3D" id="3.40.50.80">
    <property type="entry name" value="Nucleotide-binding domain of ferredoxin-NADP reductase (FNR) module"/>
    <property type="match status" value="1"/>
</dbReference>
<dbReference type="Gene3D" id="2.40.30.10">
    <property type="entry name" value="Translation factors"/>
    <property type="match status" value="1"/>
</dbReference>
<dbReference type="InterPro" id="IPR001834">
    <property type="entry name" value="CBR-like"/>
</dbReference>
<dbReference type="InterPro" id="IPR008333">
    <property type="entry name" value="Cbr1-like_FAD-bd_dom"/>
</dbReference>
<dbReference type="InterPro" id="IPR017927">
    <property type="entry name" value="FAD-bd_FR_type"/>
</dbReference>
<dbReference type="InterPro" id="IPR001709">
    <property type="entry name" value="Flavoprot_Pyr_Nucl_cyt_Rdtase"/>
</dbReference>
<dbReference type="InterPro" id="IPR039261">
    <property type="entry name" value="FNR_nucleotide-bd"/>
</dbReference>
<dbReference type="InterPro" id="IPR001433">
    <property type="entry name" value="OxRdtase_FAD/NAD-bd"/>
</dbReference>
<dbReference type="InterPro" id="IPR017938">
    <property type="entry name" value="Riboflavin_synthase-like_b-brl"/>
</dbReference>
<dbReference type="PANTHER" id="PTHR19370">
    <property type="entry name" value="NADH-CYTOCHROME B5 REDUCTASE"/>
    <property type="match status" value="1"/>
</dbReference>
<dbReference type="PANTHER" id="PTHR19370:SF74">
    <property type="entry name" value="NADH-CYTOCHROME B5 REDUCTASE 1"/>
    <property type="match status" value="1"/>
</dbReference>
<dbReference type="Pfam" id="PF00970">
    <property type="entry name" value="FAD_binding_6"/>
    <property type="match status" value="1"/>
</dbReference>
<dbReference type="Pfam" id="PF00175">
    <property type="entry name" value="NAD_binding_1"/>
    <property type="match status" value="1"/>
</dbReference>
<dbReference type="PRINTS" id="PR00406">
    <property type="entry name" value="CYTB5RDTASE"/>
</dbReference>
<dbReference type="PRINTS" id="PR00371">
    <property type="entry name" value="FPNCR"/>
</dbReference>
<dbReference type="SUPFAM" id="SSF52343">
    <property type="entry name" value="Ferredoxin reductase-like, C-terminal NADP-linked domain"/>
    <property type="match status" value="1"/>
</dbReference>
<dbReference type="SUPFAM" id="SSF63380">
    <property type="entry name" value="Riboflavin synthase domain-like"/>
    <property type="match status" value="1"/>
</dbReference>
<dbReference type="PROSITE" id="PS51384">
    <property type="entry name" value="FAD_FR"/>
    <property type="match status" value="1"/>
</dbReference>
<accession>Q3MHW9</accession>
<organism>
    <name type="scientific">Bos taurus</name>
    <name type="common">Bovine</name>
    <dbReference type="NCBI Taxonomy" id="9913"/>
    <lineage>
        <taxon>Eukaryota</taxon>
        <taxon>Metazoa</taxon>
        <taxon>Chordata</taxon>
        <taxon>Craniata</taxon>
        <taxon>Vertebrata</taxon>
        <taxon>Euteleostomi</taxon>
        <taxon>Mammalia</taxon>
        <taxon>Eutheria</taxon>
        <taxon>Laurasiatheria</taxon>
        <taxon>Artiodactyla</taxon>
        <taxon>Ruminantia</taxon>
        <taxon>Pecora</taxon>
        <taxon>Bovidae</taxon>
        <taxon>Bovinae</taxon>
        <taxon>Bos</taxon>
    </lineage>
</organism>
<name>NB5R1_BOVIN</name>
<evidence type="ECO:0000250" key="1"/>
<evidence type="ECO:0000255" key="2"/>
<evidence type="ECO:0000255" key="3">
    <source>
        <dbReference type="PROSITE-ProRule" id="PRU00716"/>
    </source>
</evidence>
<evidence type="ECO:0000305" key="4"/>
<reference key="1">
    <citation type="submission" date="2005-09" db="EMBL/GenBank/DDBJ databases">
        <authorList>
            <consortium name="NIH - Mammalian Gene Collection (MGC) project"/>
        </authorList>
    </citation>
    <scope>NUCLEOTIDE SEQUENCE [LARGE SCALE MRNA]</scope>
    <source>
        <strain>Hereford</strain>
        <tissue>Ascending colon</tissue>
    </source>
</reference>
<sequence>MGLQPSPVLLASLGVGLLTLLGVALGAYLVRRSRRPPVTLLDPNEKYQLRLLDKTTVNHNTKRFRFALPTAHHVLGLPVGKHVYLSARIDGSLVIRPYTPVTSDEDQGYVDLVIKVYLKGVHPKFPEGGKMSQYLDSLKIGDVVEFRGPSGLLTYAGKGKFNIQPNKKAPPEARVARNLGMIAGGTGITPMLQLIRAILKDPEDPTQCFLLFANQTEKDIILREDLEELQARHPGRFKLWFTLDHPPEGWAYSKGFVSVDMIREHLPAPGEDVLLLLCGPPPMVQLACHPSLDKLGYSPKMRFTY</sequence>